<comment type="function">
    <text evidence="1 3">Calcium sensor that participates in triggering neurotransmitter release at the synapse (By similarity). May have a regulatory role in the membrane interactions during trafficking of synaptic vesicles at the active zone of the synapse. It binds acidic phospholipids with a specificity that requires the presence of both an acidic head group and a diacyl backbone. May play a role in dendrite formation by melanocytes.</text>
</comment>
<comment type="cofactor">
    <cofactor evidence="5">
        <name>Ca(2+)</name>
        <dbReference type="ChEBI" id="CHEBI:29108"/>
    </cofactor>
    <text evidence="2">Binds 3 Ca(2+) ions per subunit. The ions are bound to the C2 domains.</text>
</comment>
<comment type="subunit">
    <text evidence="7">Homotetramer.</text>
</comment>
<comment type="subcellular location">
    <subcellularLocation>
        <location evidence="2">Cytoplasmic vesicle</location>
        <location evidence="2">Secretory vesicle membrane</location>
        <topology evidence="4">Single-pass membrane protein</topology>
    </subcellularLocation>
    <subcellularLocation>
        <location evidence="2">Cytoplasmic vesicle</location>
        <location evidence="2">Secretory vesicle</location>
        <location evidence="2">Synaptic vesicle membrane</location>
        <topology evidence="2">Single-pass membrane protein</topology>
    </subcellularLocation>
    <subcellularLocation>
        <location evidence="2">Cytoplasmic vesicle</location>
        <location evidence="2">Secretory vesicle</location>
        <location evidence="2">Chromaffin granule membrane</location>
        <topology evidence="2">Single-pass membrane protein</topology>
    </subcellularLocation>
    <subcellularLocation>
        <location evidence="2">Cytoplasm</location>
    </subcellularLocation>
</comment>
<comment type="domain">
    <text evidence="2">The first C2 domain mediates Ca(2+)-dependent phospholipid binding.</text>
</comment>
<comment type="domain">
    <text evidence="2">The second C2 domain mediates interaction with SV2A and probably with STN2.</text>
</comment>
<comment type="similarity">
    <text evidence="7">Belongs to the synaptotagmin family.</text>
</comment>
<feature type="chain" id="PRO_0000183941" description="Synaptotagmin-1">
    <location>
        <begin position="1"/>
        <end position="424"/>
    </location>
</feature>
<feature type="topological domain" description="Vesicular" evidence="4">
    <location>
        <begin position="1"/>
        <end position="60"/>
    </location>
</feature>
<feature type="transmembrane region" description="Helical" evidence="4">
    <location>
        <begin position="61"/>
        <end position="82"/>
    </location>
</feature>
<feature type="topological domain" description="Cytoplasmic" evidence="4">
    <location>
        <begin position="83"/>
        <end position="424"/>
    </location>
</feature>
<feature type="domain" description="C2 1" evidence="5">
    <location>
        <begin position="144"/>
        <end position="263"/>
    </location>
</feature>
<feature type="domain" description="C2 2" evidence="5">
    <location>
        <begin position="275"/>
        <end position="408"/>
    </location>
</feature>
<feature type="region of interest" description="Disordered" evidence="6">
    <location>
        <begin position="117"/>
        <end position="142"/>
    </location>
</feature>
<feature type="region of interest" description="Phospholipid binding" evidence="7">
    <location>
        <begin position="138"/>
        <end position="384"/>
    </location>
</feature>
<feature type="compositionally biased region" description="Acidic residues" evidence="6">
    <location>
        <begin position="124"/>
        <end position="136"/>
    </location>
</feature>
<feature type="binding site" evidence="5">
    <location>
        <position position="174"/>
    </location>
    <ligand>
        <name>Ca(2+)</name>
        <dbReference type="ChEBI" id="CHEBI:29108"/>
        <label>2</label>
    </ligand>
</feature>
<feature type="binding site" evidence="5">
    <location>
        <position position="175"/>
    </location>
    <ligand>
        <name>Ca(2+)</name>
        <dbReference type="ChEBI" id="CHEBI:29108"/>
        <label>1</label>
    </ligand>
</feature>
<feature type="binding site" evidence="5">
    <location>
        <position position="175"/>
    </location>
    <ligand>
        <name>Ca(2+)</name>
        <dbReference type="ChEBI" id="CHEBI:29108"/>
        <label>2</label>
    </ligand>
</feature>
<feature type="binding site" evidence="5">
    <location>
        <position position="181"/>
    </location>
    <ligand>
        <name>Ca(2+)</name>
        <dbReference type="ChEBI" id="CHEBI:29108"/>
        <label>1</label>
    </ligand>
</feature>
<feature type="binding site" evidence="5">
    <location>
        <position position="233"/>
    </location>
    <ligand>
        <name>Ca(2+)</name>
        <dbReference type="ChEBI" id="CHEBI:29108"/>
        <label>1</label>
    </ligand>
</feature>
<feature type="binding site" evidence="5">
    <location>
        <position position="233"/>
    </location>
    <ligand>
        <name>Ca(2+)</name>
        <dbReference type="ChEBI" id="CHEBI:29108"/>
        <label>2</label>
    </ligand>
</feature>
<feature type="binding site" evidence="5">
    <location>
        <position position="234"/>
    </location>
    <ligand>
        <name>Ca(2+)</name>
        <dbReference type="ChEBI" id="CHEBI:29108"/>
        <label>1</label>
    </ligand>
</feature>
<feature type="binding site" evidence="5">
    <location>
        <position position="235"/>
    </location>
    <ligand>
        <name>Ca(2+)</name>
        <dbReference type="ChEBI" id="CHEBI:29108"/>
        <label>1</label>
    </ligand>
</feature>
<feature type="binding site" evidence="5">
    <location>
        <position position="235"/>
    </location>
    <ligand>
        <name>Ca(2+)</name>
        <dbReference type="ChEBI" id="CHEBI:29108"/>
        <label>2</label>
    </ligand>
</feature>
<feature type="binding site" evidence="5">
    <location>
        <position position="235"/>
    </location>
    <ligand>
        <name>Ca(2+)</name>
        <dbReference type="ChEBI" id="CHEBI:29108"/>
        <label>3</label>
    </ligand>
</feature>
<feature type="binding site" evidence="5">
    <location>
        <position position="238"/>
    </location>
    <ligand>
        <name>Ca(2+)</name>
        <dbReference type="ChEBI" id="CHEBI:29108"/>
        <label>3</label>
    </ligand>
</feature>
<feature type="binding site" evidence="5">
    <location>
        <position position="239"/>
    </location>
    <ligand>
        <name>Ca(2+)</name>
        <dbReference type="ChEBI" id="CHEBI:29108"/>
        <label>3</label>
    </ligand>
</feature>
<feature type="binding site" evidence="5">
    <location>
        <position position="241"/>
    </location>
    <ligand>
        <name>Ca(2+)</name>
        <dbReference type="ChEBI" id="CHEBI:29108"/>
        <label>2</label>
    </ligand>
</feature>
<feature type="binding site" evidence="5">
    <location>
        <position position="241"/>
    </location>
    <ligand>
        <name>Ca(2+)</name>
        <dbReference type="ChEBI" id="CHEBI:29108"/>
        <label>3</label>
    </ligand>
</feature>
<feature type="binding site" evidence="5">
    <location>
        <position position="306"/>
    </location>
    <ligand>
        <name>Ca(2+)</name>
        <dbReference type="ChEBI" id="CHEBI:29108"/>
        <label>4</label>
    </ligand>
</feature>
<feature type="binding site" evidence="5">
    <location>
        <position position="306"/>
    </location>
    <ligand>
        <name>Ca(2+)</name>
        <dbReference type="ChEBI" id="CHEBI:29108"/>
        <label>5</label>
    </ligand>
</feature>
<feature type="binding site" evidence="5">
    <location>
        <position position="312"/>
    </location>
    <ligand>
        <name>Ca(2+)</name>
        <dbReference type="ChEBI" id="CHEBI:29108"/>
        <label>4</label>
    </ligand>
</feature>
<feature type="binding site" evidence="5">
    <location>
        <position position="366"/>
    </location>
    <ligand>
        <name>Ca(2+)</name>
        <dbReference type="ChEBI" id="CHEBI:29108"/>
        <label>4</label>
    </ligand>
</feature>
<feature type="binding site" evidence="5">
    <location>
        <position position="366"/>
    </location>
    <ligand>
        <name>Ca(2+)</name>
        <dbReference type="ChEBI" id="CHEBI:29108"/>
        <label>5</label>
    </ligand>
</feature>
<feature type="binding site" evidence="5">
    <location>
        <position position="368"/>
    </location>
    <ligand>
        <name>Ca(2+)</name>
        <dbReference type="ChEBI" id="CHEBI:29108"/>
        <label>4</label>
    </ligand>
</feature>
<feature type="binding site" evidence="5">
    <location>
        <position position="368"/>
    </location>
    <ligand>
        <name>Ca(2+)</name>
        <dbReference type="ChEBI" id="CHEBI:29108"/>
        <label>5</label>
    </ligand>
</feature>
<feature type="binding site" evidence="5">
    <location>
        <position position="374"/>
    </location>
    <ligand>
        <name>Ca(2+)</name>
        <dbReference type="ChEBI" id="CHEBI:29108"/>
        <label>5</label>
    </ligand>
</feature>
<feature type="lipid moiety-binding region" description="S-palmitoyl cysteine" evidence="2">
    <location>
        <position position="77"/>
    </location>
</feature>
<feature type="lipid moiety-binding region" description="S-palmitoyl cysteine" evidence="2">
    <location>
        <position position="78"/>
    </location>
</feature>
<feature type="lipid moiety-binding region" description="S-palmitoyl cysteine" evidence="2">
    <location>
        <position position="80"/>
    </location>
</feature>
<feature type="lipid moiety-binding region" description="S-palmitoyl cysteine" evidence="2">
    <location>
        <position position="82"/>
    </location>
</feature>
<feature type="lipid moiety-binding region" description="S-palmitoyl cysteine" evidence="2">
    <location>
        <position position="85"/>
    </location>
</feature>
<feature type="glycosylation site" description="N-linked (GlcNAc...) asparagine" evidence="4">
    <location>
        <position position="25"/>
    </location>
</feature>
<name>SYT1_CHICK</name>
<accession>P47191</accession>
<keyword id="KW-0106">Calcium</keyword>
<keyword id="KW-0963">Cytoplasm</keyword>
<keyword id="KW-0968">Cytoplasmic vesicle</keyword>
<keyword id="KW-0221">Differentiation</keyword>
<keyword id="KW-0325">Glycoprotein</keyword>
<keyword id="KW-0449">Lipoprotein</keyword>
<keyword id="KW-0472">Membrane</keyword>
<keyword id="KW-0479">Metal-binding</keyword>
<keyword id="KW-0564">Palmitate</keyword>
<keyword id="KW-1185">Reference proteome</keyword>
<keyword id="KW-0677">Repeat</keyword>
<keyword id="KW-0770">Synapse</keyword>
<keyword id="KW-0812">Transmembrane</keyword>
<keyword id="KW-1133">Transmembrane helix</keyword>
<organism>
    <name type="scientific">Gallus gallus</name>
    <name type="common">Chicken</name>
    <dbReference type="NCBI Taxonomy" id="9031"/>
    <lineage>
        <taxon>Eukaryota</taxon>
        <taxon>Metazoa</taxon>
        <taxon>Chordata</taxon>
        <taxon>Craniata</taxon>
        <taxon>Vertebrata</taxon>
        <taxon>Euteleostomi</taxon>
        <taxon>Archelosauria</taxon>
        <taxon>Archosauria</taxon>
        <taxon>Dinosauria</taxon>
        <taxon>Saurischia</taxon>
        <taxon>Theropoda</taxon>
        <taxon>Coelurosauria</taxon>
        <taxon>Aves</taxon>
        <taxon>Neognathae</taxon>
        <taxon>Galloanserae</taxon>
        <taxon>Galliformes</taxon>
        <taxon>Phasianidae</taxon>
        <taxon>Phasianinae</taxon>
        <taxon>Gallus</taxon>
    </lineage>
</organism>
<sequence>MVSESHHEALAAPPATTVAAALPSNVTEPAAPGGGGGKEDAFSNLKKKFMNELNKIPLPPWALIAIAIVAVLLILTCCFCLCKKCLFKKKNKKKGKEKGGKNAINMKDVKDLGKTMKDQALKDDDAETGLTDGEEKEEPKEVEKLGKIQYSLDYDFQNNQLLVGIIQAAELPALDMGGTSDPYVKVFLLPDKKKKYETKVHRKTLNPVFNEQFTFKVPYSELGGKTLVMAVYDFDRFSKHDIIGEYKVAMNTVDFGHVTEEWRDLQSAEKEEQEKLGDICFSLRYVPTAGKLTVVILEAKNLKKMDVGGLSDPYVKIHLMQNGKRLKKKKTTIKKNTLNPYYNESFSFEVPFEQIQKVQIVVTVLDYDKIGKNDAIGKVFVGYNSTGAELRHWSDMLANPRRPIAQWHTLQPEEEVDAMLAVKK</sequence>
<gene>
    <name type="primary">SYT1</name>
</gene>
<evidence type="ECO:0000250" key="1">
    <source>
        <dbReference type="UniProtKB" id="P21579"/>
    </source>
</evidence>
<evidence type="ECO:0000250" key="2">
    <source>
        <dbReference type="UniProtKB" id="P21707"/>
    </source>
</evidence>
<evidence type="ECO:0000250" key="3">
    <source>
        <dbReference type="UniProtKB" id="P46096"/>
    </source>
</evidence>
<evidence type="ECO:0000255" key="4"/>
<evidence type="ECO:0000255" key="5">
    <source>
        <dbReference type="PROSITE-ProRule" id="PRU00041"/>
    </source>
</evidence>
<evidence type="ECO:0000256" key="6">
    <source>
        <dbReference type="SAM" id="MobiDB-lite"/>
    </source>
</evidence>
<evidence type="ECO:0000305" key="7"/>
<proteinExistence type="evidence at transcript level"/>
<protein>
    <recommendedName>
        <fullName>Synaptotagmin-1</fullName>
    </recommendedName>
    <alternativeName>
        <fullName>Synaptotagmin I</fullName>
        <shortName>SytI</shortName>
    </alternativeName>
    <alternativeName>
        <fullName>p65</fullName>
    </alternativeName>
</protein>
<reference key="1">
    <citation type="journal article" date="1993" name="Dev. Biol.">
        <title>Coordinate and noncoordinate regulation of synaptic vesicle protein genes during embryonic development.</title>
        <authorList>
            <person name="Lou X."/>
            <person name="Bixby J.L."/>
        </authorList>
    </citation>
    <scope>NUCLEOTIDE SEQUENCE [MRNA]</scope>
</reference>
<dbReference type="EMBL" id="S64957">
    <property type="protein sequence ID" value="AAB28081.1"/>
    <property type="molecule type" value="mRNA"/>
</dbReference>
<dbReference type="PIR" id="I51210">
    <property type="entry name" value="I51210"/>
</dbReference>
<dbReference type="RefSeq" id="NP_001383882.1">
    <property type="nucleotide sequence ID" value="NM_001396953.1"/>
</dbReference>
<dbReference type="RefSeq" id="NP_001383883.1">
    <property type="nucleotide sequence ID" value="NM_001396954.1"/>
</dbReference>
<dbReference type="RefSeq" id="NP_990502.1">
    <property type="nucleotide sequence ID" value="NM_205171.2"/>
</dbReference>
<dbReference type="RefSeq" id="XP_015134173.1">
    <property type="nucleotide sequence ID" value="XM_015278687.1"/>
</dbReference>
<dbReference type="RefSeq" id="XP_015134214.1">
    <property type="nucleotide sequence ID" value="XM_015278728.1"/>
</dbReference>
<dbReference type="RefSeq" id="XP_015134261.1">
    <property type="nucleotide sequence ID" value="XM_015278775.1"/>
</dbReference>
<dbReference type="RefSeq" id="XP_015134330.1">
    <property type="nucleotide sequence ID" value="XM_015278844.1"/>
</dbReference>
<dbReference type="RefSeq" id="XP_046762739.1">
    <property type="nucleotide sequence ID" value="XM_046906783.1"/>
</dbReference>
<dbReference type="RefSeq" id="XP_046762740.1">
    <property type="nucleotide sequence ID" value="XM_046906784.1"/>
</dbReference>
<dbReference type="RefSeq" id="XP_046770407.1">
    <property type="nucleotide sequence ID" value="XM_046914451.1"/>
</dbReference>
<dbReference type="RefSeq" id="XP_046770429.1">
    <property type="nucleotide sequence ID" value="XM_046914473.1"/>
</dbReference>
<dbReference type="SMR" id="P47191"/>
<dbReference type="FunCoup" id="P47191">
    <property type="interactions" value="377"/>
</dbReference>
<dbReference type="STRING" id="9031.ENSGALP00000042075"/>
<dbReference type="GlyCosmos" id="P47191">
    <property type="glycosylation" value="1 site, No reported glycans"/>
</dbReference>
<dbReference type="GlyGen" id="P47191">
    <property type="glycosylation" value="1 site"/>
</dbReference>
<dbReference type="PaxDb" id="9031-ENSGALP00000042359"/>
<dbReference type="Ensembl" id="ENSGALT00010028805.1">
    <property type="protein sequence ID" value="ENSGALP00010016573.1"/>
    <property type="gene ID" value="ENSGALG00010012026.1"/>
</dbReference>
<dbReference type="GeneID" id="396083"/>
<dbReference type="KEGG" id="gga:396083"/>
<dbReference type="CTD" id="6857"/>
<dbReference type="VEuPathDB" id="HostDB:geneid_396083"/>
<dbReference type="eggNOG" id="KOG1028">
    <property type="taxonomic scope" value="Eukaryota"/>
</dbReference>
<dbReference type="GeneTree" id="ENSGT00940000155394"/>
<dbReference type="HOGENOM" id="CLU_023008_0_1_1"/>
<dbReference type="InParanoid" id="P47191"/>
<dbReference type="OMA" id="AXKEEEL"/>
<dbReference type="OrthoDB" id="67700at2759"/>
<dbReference type="PhylomeDB" id="P47191"/>
<dbReference type="TreeFam" id="TF315600"/>
<dbReference type="Reactome" id="R-GGA-181430">
    <property type="pathway name" value="Norepinephrine Neurotransmitter Release Cycle"/>
</dbReference>
<dbReference type="Reactome" id="R-GGA-264642">
    <property type="pathway name" value="Acetylcholine Neurotransmitter Release Cycle"/>
</dbReference>
<dbReference type="Reactome" id="R-GGA-8856825">
    <property type="pathway name" value="Cargo recognition for clathrin-mediated endocytosis"/>
</dbReference>
<dbReference type="Reactome" id="R-GGA-8856828">
    <property type="pathway name" value="Clathrin-mediated endocytosis"/>
</dbReference>
<dbReference type="PRO" id="PR:P47191"/>
<dbReference type="Proteomes" id="UP000000539">
    <property type="component" value="Chromosome 1"/>
</dbReference>
<dbReference type="Bgee" id="ENSGALG00000041094">
    <property type="expression patterns" value="Expressed in brain and 8 other cell types or tissues"/>
</dbReference>
<dbReference type="GO" id="GO:0030424">
    <property type="term" value="C:axon"/>
    <property type="evidence" value="ECO:0000318"/>
    <property type="project" value="GO_Central"/>
</dbReference>
<dbReference type="GO" id="GO:0042584">
    <property type="term" value="C:chromaffin granule membrane"/>
    <property type="evidence" value="ECO:0007669"/>
    <property type="project" value="UniProtKB-SubCell"/>
</dbReference>
<dbReference type="GO" id="GO:0031045">
    <property type="term" value="C:dense core granule"/>
    <property type="evidence" value="ECO:0000318"/>
    <property type="project" value="GO_Central"/>
</dbReference>
<dbReference type="GO" id="GO:0070382">
    <property type="term" value="C:exocytic vesicle"/>
    <property type="evidence" value="ECO:0000318"/>
    <property type="project" value="GO_Central"/>
</dbReference>
<dbReference type="GO" id="GO:0005886">
    <property type="term" value="C:plasma membrane"/>
    <property type="evidence" value="ECO:0000318"/>
    <property type="project" value="GO_Central"/>
</dbReference>
<dbReference type="GO" id="GO:0030672">
    <property type="term" value="C:synaptic vesicle membrane"/>
    <property type="evidence" value="ECO:0000318"/>
    <property type="project" value="GO_Central"/>
</dbReference>
<dbReference type="GO" id="GO:0061891">
    <property type="term" value="F:calcium ion sensor activity"/>
    <property type="evidence" value="ECO:0000318"/>
    <property type="project" value="GO_Central"/>
</dbReference>
<dbReference type="GO" id="GO:0005544">
    <property type="term" value="F:calcium-dependent phospholipid binding"/>
    <property type="evidence" value="ECO:0000318"/>
    <property type="project" value="GO_Central"/>
</dbReference>
<dbReference type="GO" id="GO:0046872">
    <property type="term" value="F:metal ion binding"/>
    <property type="evidence" value="ECO:0007669"/>
    <property type="project" value="UniProtKB-KW"/>
</dbReference>
<dbReference type="GO" id="GO:0000149">
    <property type="term" value="F:SNARE binding"/>
    <property type="evidence" value="ECO:0000318"/>
    <property type="project" value="GO_Central"/>
</dbReference>
<dbReference type="GO" id="GO:0099502">
    <property type="term" value="P:calcium-dependent activation of synaptic vesicle fusion"/>
    <property type="evidence" value="ECO:0000318"/>
    <property type="project" value="GO_Central"/>
</dbReference>
<dbReference type="GO" id="GO:0030154">
    <property type="term" value="P:cell differentiation"/>
    <property type="evidence" value="ECO:0007669"/>
    <property type="project" value="UniProtKB-KW"/>
</dbReference>
<dbReference type="GO" id="GO:0017158">
    <property type="term" value="P:regulation of calcium ion-dependent exocytosis"/>
    <property type="evidence" value="ECO:0000318"/>
    <property type="project" value="GO_Central"/>
</dbReference>
<dbReference type="GO" id="GO:2000300">
    <property type="term" value="P:regulation of synaptic vesicle exocytosis"/>
    <property type="evidence" value="ECO:0000318"/>
    <property type="project" value="GO_Central"/>
</dbReference>
<dbReference type="GO" id="GO:0016192">
    <property type="term" value="P:vesicle-mediated transport"/>
    <property type="evidence" value="ECO:0000318"/>
    <property type="project" value="GO_Central"/>
</dbReference>
<dbReference type="CDD" id="cd08385">
    <property type="entry name" value="C2A_Synaptotagmin-1-5-6-9-10"/>
    <property type="match status" value="1"/>
</dbReference>
<dbReference type="CDD" id="cd08402">
    <property type="entry name" value="C2B_Synaptotagmin-1"/>
    <property type="match status" value="1"/>
</dbReference>
<dbReference type="CDD" id="cd21963">
    <property type="entry name" value="Syt1_N"/>
    <property type="match status" value="1"/>
</dbReference>
<dbReference type="FunFam" id="2.60.40.150:FF:000007">
    <property type="entry name" value="Synaptotagmin 1"/>
    <property type="match status" value="1"/>
</dbReference>
<dbReference type="FunFam" id="2.60.40.150:FF:000016">
    <property type="entry name" value="Synaptotagmin 1"/>
    <property type="match status" value="1"/>
</dbReference>
<dbReference type="Gene3D" id="2.60.40.150">
    <property type="entry name" value="C2 domain"/>
    <property type="match status" value="2"/>
</dbReference>
<dbReference type="InterPro" id="IPR000008">
    <property type="entry name" value="C2_dom"/>
</dbReference>
<dbReference type="InterPro" id="IPR035892">
    <property type="entry name" value="C2_domain_sf"/>
</dbReference>
<dbReference type="InterPro" id="IPR001565">
    <property type="entry name" value="Synaptotagmin"/>
</dbReference>
<dbReference type="PANTHER" id="PTHR10024">
    <property type="entry name" value="SYNAPTOTAGMIN"/>
    <property type="match status" value="1"/>
</dbReference>
<dbReference type="PANTHER" id="PTHR10024:SF239">
    <property type="entry name" value="SYNAPTOTAGMIN-1"/>
    <property type="match status" value="1"/>
</dbReference>
<dbReference type="Pfam" id="PF00168">
    <property type="entry name" value="C2"/>
    <property type="match status" value="2"/>
</dbReference>
<dbReference type="PRINTS" id="PR00360">
    <property type="entry name" value="C2DOMAIN"/>
</dbReference>
<dbReference type="PRINTS" id="PR00399">
    <property type="entry name" value="SYNAPTOTAGMN"/>
</dbReference>
<dbReference type="SMART" id="SM00239">
    <property type="entry name" value="C2"/>
    <property type="match status" value="2"/>
</dbReference>
<dbReference type="SUPFAM" id="SSF49562">
    <property type="entry name" value="C2 domain (Calcium/lipid-binding domain, CaLB)"/>
    <property type="match status" value="2"/>
</dbReference>
<dbReference type="PROSITE" id="PS50004">
    <property type="entry name" value="C2"/>
    <property type="match status" value="2"/>
</dbReference>